<comment type="function">
    <text evidence="1">NDH shuttles electrons from NAD(P)H:plastoquinone, via FMN and iron-sulfur (Fe-S) centers, to quinones in the photosynthetic chain and possibly in a chloroplast respiratory chain. The immediate electron acceptor for the enzyme in this species is believed to be plastoquinone. Couples the redox reaction to proton translocation, and thus conserves the redox energy in a proton gradient.</text>
</comment>
<comment type="catalytic activity">
    <reaction evidence="1">
        <text>a plastoquinone + NADH + (n+1) H(+)(in) = a plastoquinol + NAD(+) + n H(+)(out)</text>
        <dbReference type="Rhea" id="RHEA:42608"/>
        <dbReference type="Rhea" id="RHEA-COMP:9561"/>
        <dbReference type="Rhea" id="RHEA-COMP:9562"/>
        <dbReference type="ChEBI" id="CHEBI:15378"/>
        <dbReference type="ChEBI" id="CHEBI:17757"/>
        <dbReference type="ChEBI" id="CHEBI:57540"/>
        <dbReference type="ChEBI" id="CHEBI:57945"/>
        <dbReference type="ChEBI" id="CHEBI:62192"/>
    </reaction>
</comment>
<comment type="catalytic activity">
    <reaction evidence="1">
        <text>a plastoquinone + NADPH + (n+1) H(+)(in) = a plastoquinol + NADP(+) + n H(+)(out)</text>
        <dbReference type="Rhea" id="RHEA:42612"/>
        <dbReference type="Rhea" id="RHEA-COMP:9561"/>
        <dbReference type="Rhea" id="RHEA-COMP:9562"/>
        <dbReference type="ChEBI" id="CHEBI:15378"/>
        <dbReference type="ChEBI" id="CHEBI:17757"/>
        <dbReference type="ChEBI" id="CHEBI:57783"/>
        <dbReference type="ChEBI" id="CHEBI:58349"/>
        <dbReference type="ChEBI" id="CHEBI:62192"/>
    </reaction>
</comment>
<comment type="cofactor">
    <cofactor evidence="1">
        <name>[4Fe-4S] cluster</name>
        <dbReference type="ChEBI" id="CHEBI:49883"/>
    </cofactor>
    <text evidence="1">Binds 1 [4Fe-4S] cluster.</text>
</comment>
<comment type="subunit">
    <text evidence="1">NDH is composed of at least 16 different subunits, 5 of which are encoded in the nucleus.</text>
</comment>
<comment type="subcellular location">
    <subcellularLocation>
        <location evidence="1">Plastid</location>
        <location evidence="1">Chloroplast thylakoid membrane</location>
        <topology evidence="1">Peripheral membrane protein</topology>
        <orientation evidence="1">Stromal side</orientation>
    </subcellularLocation>
</comment>
<comment type="similarity">
    <text evidence="1">Belongs to the complex I 20 kDa subunit family.</text>
</comment>
<feature type="chain" id="PRO_0000118744" description="NAD(P)H-quinone oxidoreductase subunit K, chloroplastic">
    <location>
        <begin position="1"/>
        <end position="230"/>
    </location>
</feature>
<feature type="binding site" evidence="1">
    <location>
        <position position="43"/>
    </location>
    <ligand>
        <name>[4Fe-4S] cluster</name>
        <dbReference type="ChEBI" id="CHEBI:49883"/>
    </ligand>
</feature>
<feature type="binding site" evidence="1">
    <location>
        <position position="44"/>
    </location>
    <ligand>
        <name>[4Fe-4S] cluster</name>
        <dbReference type="ChEBI" id="CHEBI:49883"/>
    </ligand>
</feature>
<feature type="binding site" evidence="1">
    <location>
        <position position="108"/>
    </location>
    <ligand>
        <name>[4Fe-4S] cluster</name>
        <dbReference type="ChEBI" id="CHEBI:49883"/>
    </ligand>
</feature>
<feature type="binding site" evidence="1">
    <location>
        <position position="139"/>
    </location>
    <ligand>
        <name>[4Fe-4S] cluster</name>
        <dbReference type="ChEBI" id="CHEBI:49883"/>
    </ligand>
</feature>
<protein>
    <recommendedName>
        <fullName evidence="1">NAD(P)H-quinone oxidoreductase subunit K, chloroplastic</fullName>
        <ecNumber evidence="1">7.1.1.-</ecNumber>
    </recommendedName>
    <alternativeName>
        <fullName evidence="1">NAD(P)H dehydrogenase subunit K</fullName>
    </alternativeName>
    <alternativeName>
        <fullName evidence="1">NADH-plastoquinone oxidoreductase subunit K</fullName>
    </alternativeName>
</protein>
<proteinExistence type="inferred from homology"/>
<gene>
    <name evidence="1" type="primary">ndhK</name>
    <name type="synonym">psbG</name>
</gene>
<sequence>MNSIEFPLIDRTTQNSVISTTLNDLSNWSRLSSLWPLLYGTSCCFIEFASLIGSRFDFDRYGLVPRSSPRQADLILTAGTVTMKMAPSLVRLYEQMPEPKYVIAMGACTITGGMFSTDSYSTVRGVDKLIPVDVYLPGCPPKPESILDAITKLRKKISREIHEDQTSSLSSQRENRCFTTNHKFYVERSTHTGNYDQVLFHQPPSTSEISSDTFFRYQKVQYPPRNEIVN</sequence>
<accession>Q9BBT7</accession>
<evidence type="ECO:0000255" key="1">
    <source>
        <dbReference type="HAMAP-Rule" id="MF_01356"/>
    </source>
</evidence>
<organism>
    <name type="scientific">Lotus japonicus</name>
    <name type="common">Lotus corniculatus var. japonicus</name>
    <dbReference type="NCBI Taxonomy" id="34305"/>
    <lineage>
        <taxon>Eukaryota</taxon>
        <taxon>Viridiplantae</taxon>
        <taxon>Streptophyta</taxon>
        <taxon>Embryophyta</taxon>
        <taxon>Tracheophyta</taxon>
        <taxon>Spermatophyta</taxon>
        <taxon>Magnoliopsida</taxon>
        <taxon>eudicotyledons</taxon>
        <taxon>Gunneridae</taxon>
        <taxon>Pentapetalae</taxon>
        <taxon>rosids</taxon>
        <taxon>fabids</taxon>
        <taxon>Fabales</taxon>
        <taxon>Fabaceae</taxon>
        <taxon>Papilionoideae</taxon>
        <taxon>50 kb inversion clade</taxon>
        <taxon>NPAAA clade</taxon>
        <taxon>Hologalegina</taxon>
        <taxon>robinioid clade</taxon>
        <taxon>Loteae</taxon>
        <taxon>Lotus</taxon>
    </lineage>
</organism>
<reference key="1">
    <citation type="journal article" date="2000" name="DNA Res.">
        <title>Complete structure of the chloroplast genome of a legume, Lotus japonicus.</title>
        <authorList>
            <person name="Kato T."/>
            <person name="Kaneko T."/>
            <person name="Sato S."/>
            <person name="Nakamura Y."/>
            <person name="Tabata S."/>
        </authorList>
    </citation>
    <scope>NUCLEOTIDE SEQUENCE [LARGE SCALE GENOMIC DNA]</scope>
    <source>
        <strain>cv. Miyakojima MG-20</strain>
    </source>
</reference>
<geneLocation type="chloroplast"/>
<keyword id="KW-0004">4Fe-4S</keyword>
<keyword id="KW-0150">Chloroplast</keyword>
<keyword id="KW-0408">Iron</keyword>
<keyword id="KW-0411">Iron-sulfur</keyword>
<keyword id="KW-0472">Membrane</keyword>
<keyword id="KW-0479">Metal-binding</keyword>
<keyword id="KW-0520">NAD</keyword>
<keyword id="KW-0521">NADP</keyword>
<keyword id="KW-0934">Plastid</keyword>
<keyword id="KW-0618">Plastoquinone</keyword>
<keyword id="KW-0874">Quinone</keyword>
<keyword id="KW-0793">Thylakoid</keyword>
<keyword id="KW-1278">Translocase</keyword>
<keyword id="KW-0813">Transport</keyword>
<dbReference type="EC" id="7.1.1.-" evidence="1"/>
<dbReference type="EMBL" id="AP002983">
    <property type="protein sequence ID" value="BAB33182.1"/>
    <property type="molecule type" value="Genomic_DNA"/>
</dbReference>
<dbReference type="RefSeq" id="NP_084784.1">
    <property type="nucleotide sequence ID" value="NC_002694.1"/>
</dbReference>
<dbReference type="SMR" id="Q9BBT7"/>
<dbReference type="GeneID" id="802836"/>
<dbReference type="OMA" id="IMIKDYY"/>
<dbReference type="GO" id="GO:0009535">
    <property type="term" value="C:chloroplast thylakoid membrane"/>
    <property type="evidence" value="ECO:0007669"/>
    <property type="project" value="UniProtKB-SubCell"/>
</dbReference>
<dbReference type="GO" id="GO:0045271">
    <property type="term" value="C:respiratory chain complex I"/>
    <property type="evidence" value="ECO:0007669"/>
    <property type="project" value="TreeGrafter"/>
</dbReference>
<dbReference type="GO" id="GO:0051539">
    <property type="term" value="F:4 iron, 4 sulfur cluster binding"/>
    <property type="evidence" value="ECO:0007669"/>
    <property type="project" value="UniProtKB-KW"/>
</dbReference>
<dbReference type="GO" id="GO:0005506">
    <property type="term" value="F:iron ion binding"/>
    <property type="evidence" value="ECO:0007669"/>
    <property type="project" value="UniProtKB-UniRule"/>
</dbReference>
<dbReference type="GO" id="GO:0008137">
    <property type="term" value="F:NADH dehydrogenase (ubiquinone) activity"/>
    <property type="evidence" value="ECO:0007669"/>
    <property type="project" value="InterPro"/>
</dbReference>
<dbReference type="GO" id="GO:0048038">
    <property type="term" value="F:quinone binding"/>
    <property type="evidence" value="ECO:0007669"/>
    <property type="project" value="UniProtKB-KW"/>
</dbReference>
<dbReference type="GO" id="GO:0009060">
    <property type="term" value="P:aerobic respiration"/>
    <property type="evidence" value="ECO:0007669"/>
    <property type="project" value="TreeGrafter"/>
</dbReference>
<dbReference type="GO" id="GO:0015990">
    <property type="term" value="P:electron transport coupled proton transport"/>
    <property type="evidence" value="ECO:0007669"/>
    <property type="project" value="TreeGrafter"/>
</dbReference>
<dbReference type="GO" id="GO:0019684">
    <property type="term" value="P:photosynthesis, light reaction"/>
    <property type="evidence" value="ECO:0007669"/>
    <property type="project" value="UniProtKB-UniRule"/>
</dbReference>
<dbReference type="FunFam" id="3.40.50.12280:FF:000003">
    <property type="entry name" value="NAD(P)H-quinone oxidoreductase subunit K, chloroplastic"/>
    <property type="match status" value="1"/>
</dbReference>
<dbReference type="Gene3D" id="3.40.50.12280">
    <property type="match status" value="1"/>
</dbReference>
<dbReference type="HAMAP" id="MF_01356">
    <property type="entry name" value="NDH1_NuoB"/>
    <property type="match status" value="1"/>
</dbReference>
<dbReference type="InterPro" id="IPR006137">
    <property type="entry name" value="NADH_UbQ_OxRdtase-like_20kDa"/>
</dbReference>
<dbReference type="InterPro" id="IPR006138">
    <property type="entry name" value="NADH_UQ_OxRdtase_20Kd_su"/>
</dbReference>
<dbReference type="NCBIfam" id="TIGR01957">
    <property type="entry name" value="nuoB_fam"/>
    <property type="match status" value="1"/>
</dbReference>
<dbReference type="NCBIfam" id="NF005012">
    <property type="entry name" value="PRK06411.1"/>
    <property type="match status" value="1"/>
</dbReference>
<dbReference type="PANTHER" id="PTHR11995">
    <property type="entry name" value="NADH DEHYDROGENASE"/>
    <property type="match status" value="1"/>
</dbReference>
<dbReference type="PANTHER" id="PTHR11995:SF14">
    <property type="entry name" value="NADH DEHYDROGENASE [UBIQUINONE] IRON-SULFUR PROTEIN 7, MITOCHONDRIAL"/>
    <property type="match status" value="1"/>
</dbReference>
<dbReference type="Pfam" id="PF01058">
    <property type="entry name" value="Oxidored_q6"/>
    <property type="match status" value="1"/>
</dbReference>
<dbReference type="SUPFAM" id="SSF56770">
    <property type="entry name" value="HydA/Nqo6-like"/>
    <property type="match status" value="1"/>
</dbReference>
<dbReference type="PROSITE" id="PS01150">
    <property type="entry name" value="COMPLEX1_20K"/>
    <property type="match status" value="1"/>
</dbReference>
<name>NDHK_LOTJA</name>